<organism>
    <name type="scientific">Rattus norvegicus</name>
    <name type="common">Rat</name>
    <dbReference type="NCBI Taxonomy" id="10116"/>
    <lineage>
        <taxon>Eukaryota</taxon>
        <taxon>Metazoa</taxon>
        <taxon>Chordata</taxon>
        <taxon>Craniata</taxon>
        <taxon>Vertebrata</taxon>
        <taxon>Euteleostomi</taxon>
        <taxon>Mammalia</taxon>
        <taxon>Eutheria</taxon>
        <taxon>Euarchontoglires</taxon>
        <taxon>Glires</taxon>
        <taxon>Rodentia</taxon>
        <taxon>Myomorpha</taxon>
        <taxon>Muroidea</taxon>
        <taxon>Muridae</taxon>
        <taxon>Murinae</taxon>
        <taxon>Rattus</taxon>
    </lineage>
</organism>
<keyword id="KW-0472">Membrane</keyword>
<keyword id="KW-0496">Mitochondrion</keyword>
<keyword id="KW-1000">Mitochondrion outer membrane</keyword>
<keyword id="KW-0547">Nucleotide-binding</keyword>
<keyword id="KW-0597">Phosphoprotein</keyword>
<keyword id="KW-1185">Reference proteome</keyword>
<keyword id="KW-0812">Transmembrane</keyword>
<keyword id="KW-1133">Transmembrane helix</keyword>
<evidence type="ECO:0000250" key="1"/>
<evidence type="ECO:0000250" key="2">
    <source>
        <dbReference type="UniProtKB" id="Q8BGV8"/>
    </source>
</evidence>
<evidence type="ECO:0000250" key="3">
    <source>
        <dbReference type="UniProtKB" id="Q9NQG6"/>
    </source>
</evidence>
<evidence type="ECO:0000255" key="4"/>
<evidence type="ECO:0000256" key="5">
    <source>
        <dbReference type="SAM" id="MobiDB-lite"/>
    </source>
</evidence>
<evidence type="ECO:0000305" key="6"/>
<evidence type="ECO:0007744" key="7">
    <source>
    </source>
</evidence>
<feature type="chain" id="PRO_0000310451" description="Mitochondrial dynamics protein MID51">
    <location>
        <begin position="1"/>
        <end position="463"/>
    </location>
</feature>
<feature type="topological domain" description="Mitochondrial intermembrane" evidence="4">
    <location>
        <begin position="1"/>
        <end position="23"/>
    </location>
</feature>
<feature type="transmembrane region" description="Helical" evidence="4">
    <location>
        <begin position="24"/>
        <end position="46"/>
    </location>
</feature>
<feature type="topological domain" description="Cytoplasmic" evidence="4">
    <location>
        <begin position="47"/>
        <end position="463"/>
    </location>
</feature>
<feature type="region of interest" description="Dimerization" evidence="1">
    <location>
        <begin position="49"/>
        <end position="195"/>
    </location>
</feature>
<feature type="region of interest" description="Disordered" evidence="5">
    <location>
        <begin position="57"/>
        <end position="77"/>
    </location>
</feature>
<feature type="region of interest" description="Important for interaction with DNM1L" evidence="1">
    <location>
        <begin position="160"/>
        <end position="169"/>
    </location>
</feature>
<feature type="region of interest" description="Important for interaction with DNM1L" evidence="1">
    <location>
        <begin position="234"/>
        <end position="243"/>
    </location>
</feature>
<feature type="binding site" evidence="1">
    <location>
        <position position="187"/>
    </location>
    <ligand>
        <name>ADP</name>
        <dbReference type="ChEBI" id="CHEBI:456216"/>
    </ligand>
</feature>
<feature type="binding site" evidence="1">
    <location>
        <position position="189"/>
    </location>
    <ligand>
        <name>ADP</name>
        <dbReference type="ChEBI" id="CHEBI:456216"/>
    </ligand>
</feature>
<feature type="binding site" evidence="1">
    <location>
        <position position="201"/>
    </location>
    <ligand>
        <name>ADP</name>
        <dbReference type="ChEBI" id="CHEBI:456216"/>
    </ligand>
</feature>
<feature type="binding site" evidence="1">
    <location>
        <position position="340"/>
    </location>
    <ligand>
        <name>ADP</name>
        <dbReference type="ChEBI" id="CHEBI:456216"/>
    </ligand>
</feature>
<feature type="binding site" evidence="1">
    <location>
        <position position="342"/>
    </location>
    <ligand>
        <name>ADP</name>
        <dbReference type="ChEBI" id="CHEBI:456216"/>
    </ligand>
</feature>
<feature type="binding site" evidence="1">
    <location>
        <position position="368"/>
    </location>
    <ligand>
        <name>ADP</name>
        <dbReference type="ChEBI" id="CHEBI:456216"/>
    </ligand>
</feature>
<feature type="modified residue" description="Phosphoserine" evidence="7">
    <location>
        <position position="55"/>
    </location>
</feature>
<feature type="modified residue" description="Phosphoserine" evidence="3">
    <location>
        <position position="59"/>
    </location>
</feature>
<feature type="modified residue" description="Phosphoserine" evidence="2">
    <location>
        <position position="79"/>
    </location>
</feature>
<feature type="modified residue" description="Phosphoserine" evidence="3">
    <location>
        <position position="94"/>
    </location>
</feature>
<dbReference type="EMBL" id="BC083593">
    <property type="protein sequence ID" value="AAH83593.1"/>
    <property type="molecule type" value="mRNA"/>
</dbReference>
<dbReference type="RefSeq" id="NP_001007710.1">
    <property type="nucleotide sequence ID" value="NM_001007709.1"/>
</dbReference>
<dbReference type="RefSeq" id="XP_006242143.1">
    <property type="nucleotide sequence ID" value="XM_006242081.2"/>
</dbReference>
<dbReference type="RefSeq" id="XP_006242145.1">
    <property type="nucleotide sequence ID" value="XM_006242083.3"/>
</dbReference>
<dbReference type="RefSeq" id="XP_008763940.1">
    <property type="nucleotide sequence ID" value="XM_008765718.2"/>
</dbReference>
<dbReference type="SMR" id="Q5XIS8"/>
<dbReference type="FunCoup" id="Q5XIS8">
    <property type="interactions" value="3437"/>
</dbReference>
<dbReference type="STRING" id="10116.ENSRNOP00000075752"/>
<dbReference type="iPTMnet" id="Q5XIS8"/>
<dbReference type="PhosphoSitePlus" id="Q5XIS8"/>
<dbReference type="PaxDb" id="10116-ENSRNOP00000023843"/>
<dbReference type="Ensembl" id="ENSRNOT00000092569.2">
    <property type="protein sequence ID" value="ENSRNOP00000075752.1"/>
    <property type="gene ID" value="ENSRNOG00000017553.8"/>
</dbReference>
<dbReference type="GeneID" id="315141"/>
<dbReference type="KEGG" id="rno:315141"/>
<dbReference type="UCSC" id="RGD:1359173">
    <property type="organism name" value="rat"/>
</dbReference>
<dbReference type="AGR" id="RGD:1359173"/>
<dbReference type="CTD" id="54471"/>
<dbReference type="RGD" id="1359173">
    <property type="gene designation" value="Mief1"/>
</dbReference>
<dbReference type="VEuPathDB" id="HostDB:ENSRNOG00000067422"/>
<dbReference type="eggNOG" id="KOG4542">
    <property type="taxonomic scope" value="Eukaryota"/>
</dbReference>
<dbReference type="GeneTree" id="ENSGT00390000013127"/>
<dbReference type="HOGENOM" id="CLU_046803_0_0_1"/>
<dbReference type="InParanoid" id="Q5XIS8"/>
<dbReference type="OMA" id="CEKEGDW"/>
<dbReference type="OrthoDB" id="5964386at2759"/>
<dbReference type="PhylomeDB" id="Q5XIS8"/>
<dbReference type="TreeFam" id="TF331032"/>
<dbReference type="PRO" id="PR:Q5XIS8"/>
<dbReference type="Proteomes" id="UP000002494">
    <property type="component" value="Chromosome 7"/>
</dbReference>
<dbReference type="Bgee" id="ENSRNOG00000017553">
    <property type="expression patterns" value="Expressed in skeletal muscle tissue and 18 other cell types or tissues"/>
</dbReference>
<dbReference type="ExpressionAtlas" id="Q5XIS8">
    <property type="expression patterns" value="baseline and differential"/>
</dbReference>
<dbReference type="GO" id="GO:0005759">
    <property type="term" value="C:mitochondrial matrix"/>
    <property type="evidence" value="ECO:0000266"/>
    <property type="project" value="RGD"/>
</dbReference>
<dbReference type="GO" id="GO:0005741">
    <property type="term" value="C:mitochondrial outer membrane"/>
    <property type="evidence" value="ECO:0000250"/>
    <property type="project" value="UniProtKB"/>
</dbReference>
<dbReference type="GO" id="GO:0005739">
    <property type="term" value="C:mitochondrion"/>
    <property type="evidence" value="ECO:0000250"/>
    <property type="project" value="UniProtKB"/>
</dbReference>
<dbReference type="GO" id="GO:0043531">
    <property type="term" value="F:ADP binding"/>
    <property type="evidence" value="ECO:0000266"/>
    <property type="project" value="RGD"/>
</dbReference>
<dbReference type="GO" id="GO:0019003">
    <property type="term" value="F:GDP binding"/>
    <property type="evidence" value="ECO:0000266"/>
    <property type="project" value="RGD"/>
</dbReference>
<dbReference type="GO" id="GO:0042802">
    <property type="term" value="F:identical protein binding"/>
    <property type="evidence" value="ECO:0000266"/>
    <property type="project" value="RGD"/>
</dbReference>
<dbReference type="GO" id="GO:0140978">
    <property type="term" value="F:mitochondrial large ribosomal subunit binding"/>
    <property type="evidence" value="ECO:0000266"/>
    <property type="project" value="RGD"/>
</dbReference>
<dbReference type="GO" id="GO:0071456">
    <property type="term" value="P:cellular response to hypoxia"/>
    <property type="evidence" value="ECO:0000270"/>
    <property type="project" value="RGD"/>
</dbReference>
<dbReference type="GO" id="GO:0000266">
    <property type="term" value="P:mitochondrial fission"/>
    <property type="evidence" value="ECO:0000250"/>
    <property type="project" value="UniProtKB"/>
</dbReference>
<dbReference type="GO" id="GO:1902775">
    <property type="term" value="P:mitochondrial large ribosomal subunit assembly"/>
    <property type="evidence" value="ECO:0000266"/>
    <property type="project" value="RGD"/>
</dbReference>
<dbReference type="GO" id="GO:0032981">
    <property type="term" value="P:mitochondrial respiratory chain complex I assembly"/>
    <property type="evidence" value="ECO:0000266"/>
    <property type="project" value="RGD"/>
</dbReference>
<dbReference type="GO" id="GO:0090141">
    <property type="term" value="P:positive regulation of mitochondrial fission"/>
    <property type="evidence" value="ECO:0000250"/>
    <property type="project" value="UniProtKB"/>
</dbReference>
<dbReference type="GO" id="GO:0010636">
    <property type="term" value="P:positive regulation of mitochondrial fusion"/>
    <property type="evidence" value="ECO:0000250"/>
    <property type="project" value="UniProtKB"/>
</dbReference>
<dbReference type="GO" id="GO:0070131">
    <property type="term" value="P:positive regulation of mitochondrial translation"/>
    <property type="evidence" value="ECO:0000266"/>
    <property type="project" value="RGD"/>
</dbReference>
<dbReference type="GO" id="GO:0090314">
    <property type="term" value="P:positive regulation of protein targeting to membrane"/>
    <property type="evidence" value="ECO:0000250"/>
    <property type="project" value="UniProtKB"/>
</dbReference>
<dbReference type="FunFam" id="1.10.1410.40:FF:000003">
    <property type="entry name" value="Mitochondrial dynamics protein MID51"/>
    <property type="match status" value="1"/>
</dbReference>
<dbReference type="FunFam" id="3.30.460.90:FF:000002">
    <property type="entry name" value="Mitochondrial dynamics protein MID51"/>
    <property type="match status" value="1"/>
</dbReference>
<dbReference type="Gene3D" id="1.10.1410.40">
    <property type="match status" value="1"/>
</dbReference>
<dbReference type="Gene3D" id="3.30.460.90">
    <property type="match status" value="1"/>
</dbReference>
<dbReference type="InterPro" id="IPR046906">
    <property type="entry name" value="Mab-21_HhH/H2TH-like"/>
</dbReference>
<dbReference type="InterPro" id="IPR024810">
    <property type="entry name" value="MAB21L/cGLR"/>
</dbReference>
<dbReference type="InterPro" id="IPR045909">
    <property type="entry name" value="MID49/MID51"/>
</dbReference>
<dbReference type="InterPro" id="IPR049097">
    <property type="entry name" value="MID51-like_C"/>
</dbReference>
<dbReference type="PANTHER" id="PTHR16451:SF12">
    <property type="entry name" value="MITOCHONDRIAL DYNAMICS PROTEIN MIEF1"/>
    <property type="match status" value="1"/>
</dbReference>
<dbReference type="PANTHER" id="PTHR16451">
    <property type="entry name" value="MITOCHONDRIAL DYNAMICS PROTEINS 49/51 FAMILY MEMBER"/>
    <property type="match status" value="1"/>
</dbReference>
<dbReference type="Pfam" id="PF20266">
    <property type="entry name" value="Mab-21_C"/>
    <property type="match status" value="1"/>
</dbReference>
<dbReference type="Pfam" id="PF21297">
    <property type="entry name" value="MID51-like_C"/>
    <property type="match status" value="1"/>
</dbReference>
<dbReference type="SMART" id="SM01265">
    <property type="entry name" value="Mab-21"/>
    <property type="match status" value="1"/>
</dbReference>
<accession>Q5XIS8</accession>
<gene>
    <name type="primary">Mief1</name>
    <name type="synonym">Mid51</name>
    <name type="synonym">Smcr7l</name>
</gene>
<protein>
    <recommendedName>
        <fullName>Mitochondrial dynamics protein MID51</fullName>
    </recommendedName>
    <alternativeName>
        <fullName>Mitochondrial dynamics protein of 51 kDa homolog</fullName>
    </alternativeName>
    <alternativeName>
        <fullName>Mitochondrial elongation factor 1</fullName>
    </alternativeName>
    <alternativeName>
        <fullName>Smith-Magenis syndrome chromosomal region candidate gene 7 protein-like</fullName>
    </alternativeName>
</protein>
<comment type="function">
    <text evidence="3">Mitochondrial outer membrane protein which regulates mitochondrial fission/fusion dynamics. Promotes the recruitment and association of the fission mediator dynamin-related protein 1 (DNM1L) to the mitochondrial surface independently of the mitochondrial fission FIS1 and MFF proteins. Regulates DNM1L GTPase activity and DNM1L oligomerization. Binds ADP and can also bind GDP, although with lower affinity. Does not bind CDP, UDP, ATP, AMP or GTP. Inhibits DNM1L GTPase activity in the absence of bound ADP. Requires ADP to stimulate DNM1L GTPase activity and the assembly of DNM1L into long, oligomeric tubules with a spiral pattern, as opposed to the ring-like DNM1L oligomers observed in the absence of bound ADP. Does not require ADP for its function in recruiting DNM1L.</text>
</comment>
<comment type="subunit">
    <text evidence="3">Homodimer. Interacts with DNM1L.</text>
</comment>
<comment type="subcellular location">
    <subcellularLocation>
        <location evidence="3">Mitochondrion outer membrane</location>
        <topology evidence="3">Single-pass membrane protein</topology>
    </subcellularLocation>
</comment>
<comment type="similarity">
    <text evidence="6">Belongs to the MID49/MID51 family.</text>
</comment>
<sequence length="463" mass="51309">MAGAGERKGKKDDNGIGTAIDFVLSNARLVLGVGGAAMLGIATLAVKRMYDRAISAPTSPTRLSHSGKRSWEEPNWMGSPRLLNRDMKTGLSRSLQTLPTDSSAFDTDTFCPPRPKPLARRGQVDLKKSRLRMSLQEKLLSYYRNRAAIPAGEQARAKQAAVDICAELRSFLRAKLPDMPLRDMYLSGSLYDDLQVVTADHIQLIVPLVLEQNLWSCIPGEDTIMNIPGFFLVRRENPEYFPRGSSYWDRCVVGGYLSPKTVADTFEKVVAGSINWPAIGSLLDYVIRPAPPPEALTLEVQYERDKHLVIDFLPSVTLGDTVLVARPHRLAQYDNLWRLSLRPAETARLRALDQADSGCRSLCLKILKAICKSTPALGHLTASQLTNVILHLSQEEADWSPDMLADRFLQALRGLISYLEAGVLPSALNPKVNLFAELTPHEIDELGYTLYCSLSEPEVLLQT</sequence>
<proteinExistence type="evidence at protein level"/>
<name>MID51_RAT</name>
<reference key="1">
    <citation type="journal article" date="2004" name="Genome Res.">
        <title>The status, quality, and expansion of the NIH full-length cDNA project: the Mammalian Gene Collection (MGC).</title>
        <authorList>
            <consortium name="The MGC Project Team"/>
        </authorList>
    </citation>
    <scope>NUCLEOTIDE SEQUENCE [LARGE SCALE MRNA]</scope>
    <source>
        <tissue>Testis</tissue>
    </source>
</reference>
<reference key="2">
    <citation type="journal article" date="2012" name="Nat. Commun.">
        <title>Quantitative maps of protein phosphorylation sites across 14 different rat organs and tissues.</title>
        <authorList>
            <person name="Lundby A."/>
            <person name="Secher A."/>
            <person name="Lage K."/>
            <person name="Nordsborg N.B."/>
            <person name="Dmytriyev A."/>
            <person name="Lundby C."/>
            <person name="Olsen J.V."/>
        </authorList>
    </citation>
    <scope>PHOSPHORYLATION [LARGE SCALE ANALYSIS] AT SER-55</scope>
    <scope>IDENTIFICATION BY MASS SPECTROMETRY [LARGE SCALE ANALYSIS]</scope>
</reference>